<geneLocation type="chloroplast"/>
<dbReference type="EC" id="4.1.1.39" evidence="1"/>
<dbReference type="EMBL" id="X55524">
    <property type="protein sequence ID" value="CAA39140.1"/>
    <property type="molecule type" value="Genomic_DNA"/>
</dbReference>
<dbReference type="EMBL" id="AF233069">
    <property type="protein sequence ID" value="AAF81681.1"/>
    <property type="molecule type" value="Genomic_DNA"/>
</dbReference>
<dbReference type="PDB" id="4F0H">
    <property type="method" value="X-ray"/>
    <property type="resolution" value="1.96 A"/>
    <property type="chains" value="A=1-493"/>
</dbReference>
<dbReference type="PDB" id="4F0K">
    <property type="method" value="X-ray"/>
    <property type="resolution" value="2.05 A"/>
    <property type="chains" value="A=1-493"/>
</dbReference>
<dbReference type="PDB" id="4F0M">
    <property type="method" value="X-ray"/>
    <property type="resolution" value="2.25 A"/>
    <property type="chains" value="A=1-493"/>
</dbReference>
<dbReference type="PDBsum" id="4F0H"/>
<dbReference type="PDBsum" id="4F0K"/>
<dbReference type="PDBsum" id="4F0M"/>
<dbReference type="SMR" id="P23755"/>
<dbReference type="DIP" id="DIP-60089N"/>
<dbReference type="IntAct" id="P23755">
    <property type="interactions" value="1"/>
</dbReference>
<dbReference type="eggNOG" id="ENOG502QTI9">
    <property type="taxonomic scope" value="Eukaryota"/>
</dbReference>
<dbReference type="BRENDA" id="4.1.1.39">
    <property type="organism ID" value="2381"/>
</dbReference>
<dbReference type="EvolutionaryTrace" id="P23755"/>
<dbReference type="GO" id="GO:0009507">
    <property type="term" value="C:chloroplast"/>
    <property type="evidence" value="ECO:0007669"/>
    <property type="project" value="UniProtKB-SubCell"/>
</dbReference>
<dbReference type="GO" id="GO:0000287">
    <property type="term" value="F:magnesium ion binding"/>
    <property type="evidence" value="ECO:0007669"/>
    <property type="project" value="UniProtKB-UniRule"/>
</dbReference>
<dbReference type="GO" id="GO:0004497">
    <property type="term" value="F:monooxygenase activity"/>
    <property type="evidence" value="ECO:0007669"/>
    <property type="project" value="UniProtKB-KW"/>
</dbReference>
<dbReference type="GO" id="GO:0016984">
    <property type="term" value="F:ribulose-bisphosphate carboxylase activity"/>
    <property type="evidence" value="ECO:0007669"/>
    <property type="project" value="UniProtKB-UniRule"/>
</dbReference>
<dbReference type="GO" id="GO:0019253">
    <property type="term" value="P:reductive pentose-phosphate cycle"/>
    <property type="evidence" value="ECO:0007669"/>
    <property type="project" value="UniProtKB-UniRule"/>
</dbReference>
<dbReference type="CDD" id="cd08212">
    <property type="entry name" value="RuBisCO_large_I"/>
    <property type="match status" value="1"/>
</dbReference>
<dbReference type="Gene3D" id="3.20.20.110">
    <property type="entry name" value="Ribulose bisphosphate carboxylase, large subunit, C-terminal domain"/>
    <property type="match status" value="1"/>
</dbReference>
<dbReference type="Gene3D" id="3.30.70.150">
    <property type="entry name" value="RuBisCO large subunit, N-terminal domain"/>
    <property type="match status" value="1"/>
</dbReference>
<dbReference type="HAMAP" id="MF_01338">
    <property type="entry name" value="RuBisCO_L_type1"/>
    <property type="match status" value="1"/>
</dbReference>
<dbReference type="InterPro" id="IPR033966">
    <property type="entry name" value="RuBisCO"/>
</dbReference>
<dbReference type="InterPro" id="IPR020878">
    <property type="entry name" value="RuBisCo_large_chain_AS"/>
</dbReference>
<dbReference type="InterPro" id="IPR000685">
    <property type="entry name" value="RuBisCO_lsu_C"/>
</dbReference>
<dbReference type="InterPro" id="IPR036376">
    <property type="entry name" value="RuBisCO_lsu_C_sf"/>
</dbReference>
<dbReference type="InterPro" id="IPR017443">
    <property type="entry name" value="RuBisCO_lsu_fd_N"/>
</dbReference>
<dbReference type="InterPro" id="IPR036422">
    <property type="entry name" value="RuBisCO_lsu_N_sf"/>
</dbReference>
<dbReference type="InterPro" id="IPR020888">
    <property type="entry name" value="RuBisCO_lsuI"/>
</dbReference>
<dbReference type="NCBIfam" id="NF003252">
    <property type="entry name" value="PRK04208.1"/>
    <property type="match status" value="1"/>
</dbReference>
<dbReference type="PANTHER" id="PTHR42704">
    <property type="entry name" value="RIBULOSE BISPHOSPHATE CARBOXYLASE"/>
    <property type="match status" value="1"/>
</dbReference>
<dbReference type="PANTHER" id="PTHR42704:SF17">
    <property type="entry name" value="RIBULOSE BISPHOSPHATE CARBOXYLASE LARGE CHAIN"/>
    <property type="match status" value="1"/>
</dbReference>
<dbReference type="Pfam" id="PF00016">
    <property type="entry name" value="RuBisCO_large"/>
    <property type="match status" value="1"/>
</dbReference>
<dbReference type="Pfam" id="PF02788">
    <property type="entry name" value="RuBisCO_large_N"/>
    <property type="match status" value="1"/>
</dbReference>
<dbReference type="SFLD" id="SFLDG01052">
    <property type="entry name" value="RuBisCO"/>
    <property type="match status" value="1"/>
</dbReference>
<dbReference type="SFLD" id="SFLDS00014">
    <property type="entry name" value="RuBisCO"/>
    <property type="match status" value="1"/>
</dbReference>
<dbReference type="SFLD" id="SFLDG00301">
    <property type="entry name" value="RuBisCO-like_proteins"/>
    <property type="match status" value="1"/>
</dbReference>
<dbReference type="SUPFAM" id="SSF51649">
    <property type="entry name" value="RuBisCo, C-terminal domain"/>
    <property type="match status" value="1"/>
</dbReference>
<dbReference type="SUPFAM" id="SSF54966">
    <property type="entry name" value="RuBisCO, large subunit, small (N-terminal) domain"/>
    <property type="match status" value="1"/>
</dbReference>
<dbReference type="PROSITE" id="PS00157">
    <property type="entry name" value="RUBISCO_LARGE"/>
    <property type="match status" value="1"/>
</dbReference>
<name>RBL_GALSU</name>
<keyword id="KW-0002">3D-structure</keyword>
<keyword id="KW-0113">Calvin cycle</keyword>
<keyword id="KW-0120">Carbon dioxide fixation</keyword>
<keyword id="KW-0150">Chloroplast</keyword>
<keyword id="KW-0456">Lyase</keyword>
<keyword id="KW-0460">Magnesium</keyword>
<keyword id="KW-0479">Metal-binding</keyword>
<keyword id="KW-0503">Monooxygenase</keyword>
<keyword id="KW-0560">Oxidoreductase</keyword>
<keyword id="KW-0601">Photorespiration</keyword>
<keyword id="KW-0602">Photosynthesis</keyword>
<keyword id="KW-0934">Plastid</keyword>
<keyword id="KW-0702">S-nitrosylation</keyword>
<protein>
    <recommendedName>
        <fullName evidence="1">Ribulose bisphosphate carboxylase large chain</fullName>
        <shortName evidence="1">RuBisCO large subunit</shortName>
        <ecNumber evidence="1">4.1.1.39</ecNumber>
    </recommendedName>
</protein>
<organism>
    <name type="scientific">Galdieria sulphuraria</name>
    <name type="common">Red alga</name>
    <dbReference type="NCBI Taxonomy" id="130081"/>
    <lineage>
        <taxon>Eukaryota</taxon>
        <taxon>Rhodophyta</taxon>
        <taxon>Bangiophyceae</taxon>
        <taxon>Galdieriales</taxon>
        <taxon>Galdieriaceae</taxon>
        <taxon>Galdieria</taxon>
    </lineage>
</organism>
<reference key="1">
    <citation type="journal article" date="1990" name="Mol. Gen. Genet.">
        <title>Structure of the Rubisco operon from the unicellular red alga Cyanidium caldarium: evidence for a polyphyletic origin of the plastids.</title>
        <authorList>
            <person name="Valentin K.-U."/>
            <person name="Zetsche K."/>
        </authorList>
    </citation>
    <scope>NUCLEOTIDE SEQUENCE [GENOMIC DNA]</scope>
    <source>
        <strain>14-1-1 / Isolate 107.79/Goettingen</strain>
    </source>
</reference>
<reference key="2">
    <citation type="submission" date="2000-02" db="EMBL/GenBank/DDBJ databases">
        <authorList>
            <person name="Whitney S.M."/>
            <person name="Andrews J."/>
        </authorList>
    </citation>
    <scope>NUCLEOTIDE SEQUENCE [GENOMIC DNA]</scope>
    <source>
        <strain>UTEX 2393</strain>
    </source>
</reference>
<reference evidence="5 6 7" key="3">
    <citation type="journal article" date="2012" name="Proc. Natl. Acad. Sci. U.S.A.">
        <title>Structural mechanism of RuBisCO activation by carbamylation of the active site lysine.</title>
        <authorList>
            <person name="Stec B."/>
        </authorList>
    </citation>
    <scope>X-RAY CRYSTALLOGRAPHY (1.96 ANGSTROMS) OF UNACTIVATED HOLOENZYME IN COMPLEX WITH O2 OR CO2 AND MAGNESIUM</scope>
    <scope>FUNCTION</scope>
    <scope>SUBUNIT</scope>
    <scope>S-NITROSYLATION AT CYS-181 AND CYS-460</scope>
</reference>
<proteinExistence type="evidence at protein level"/>
<gene>
    <name evidence="1" type="primary">rbcL</name>
</gene>
<evidence type="ECO:0000255" key="1">
    <source>
        <dbReference type="HAMAP-Rule" id="MF_01338"/>
    </source>
</evidence>
<evidence type="ECO:0000269" key="2">
    <source>
    </source>
</evidence>
<evidence type="ECO:0000305" key="3"/>
<evidence type="ECO:0000305" key="4">
    <source>
    </source>
</evidence>
<evidence type="ECO:0007744" key="5">
    <source>
        <dbReference type="PDB" id="4F0H"/>
    </source>
</evidence>
<evidence type="ECO:0007744" key="6">
    <source>
        <dbReference type="PDB" id="4F0K"/>
    </source>
</evidence>
<evidence type="ECO:0007744" key="7">
    <source>
        <dbReference type="PDB" id="4F0M"/>
    </source>
</evidence>
<evidence type="ECO:0007829" key="8">
    <source>
        <dbReference type="PDB" id="4F0H"/>
    </source>
</evidence>
<evidence type="ECO:0007829" key="9">
    <source>
        <dbReference type="PDB" id="4F0K"/>
    </source>
</evidence>
<comment type="function">
    <text evidence="1 2 4">RuBisCO catalyzes two reactions: the carboxylation of D-ribulose 1,5-bisphosphate, the primary event in carbon dioxide fixation, as well as the oxidative fragmentation of the pentose substrate in the photorespiration process. Both reactions occur simultaneously and in competition at the same active site (Probable). Carbon dioxide and oxygen bind in the same pocket of the enzyme in a similar manner (PubMed:23112176).</text>
</comment>
<comment type="catalytic activity">
    <reaction evidence="1 4">
        <text>2 (2R)-3-phosphoglycerate + 2 H(+) = D-ribulose 1,5-bisphosphate + CO2 + H2O</text>
        <dbReference type="Rhea" id="RHEA:23124"/>
        <dbReference type="ChEBI" id="CHEBI:15377"/>
        <dbReference type="ChEBI" id="CHEBI:15378"/>
        <dbReference type="ChEBI" id="CHEBI:16526"/>
        <dbReference type="ChEBI" id="CHEBI:57870"/>
        <dbReference type="ChEBI" id="CHEBI:58272"/>
        <dbReference type="EC" id="4.1.1.39"/>
    </reaction>
</comment>
<comment type="catalytic activity">
    <reaction evidence="1 4">
        <text>D-ribulose 1,5-bisphosphate + O2 = 2-phosphoglycolate + (2R)-3-phosphoglycerate + 2 H(+)</text>
        <dbReference type="Rhea" id="RHEA:36631"/>
        <dbReference type="ChEBI" id="CHEBI:15378"/>
        <dbReference type="ChEBI" id="CHEBI:15379"/>
        <dbReference type="ChEBI" id="CHEBI:57870"/>
        <dbReference type="ChEBI" id="CHEBI:58033"/>
        <dbReference type="ChEBI" id="CHEBI:58272"/>
    </reaction>
</comment>
<comment type="cofactor">
    <cofactor evidence="1">
        <name>Mg(2+)</name>
        <dbReference type="ChEBI" id="CHEBI:18420"/>
    </cofactor>
    <text evidence="1">Binds 1 Mg(2+) ion per subunit.</text>
</comment>
<comment type="subunit">
    <text evidence="1 2">Heterohexadecamer of 8 large chains and 8 small chains.</text>
</comment>
<comment type="subcellular location">
    <subcellularLocation>
        <location evidence="1">Plastid</location>
        <location evidence="1">Chloroplast</location>
    </subcellularLocation>
</comment>
<comment type="miscellaneous">
    <text evidence="1 2">The basic functional RuBisCO is composed of a large chain homodimer in a 'head-to-tail' conformation. In form I RuBisCO this homodimer is arranged in a barrel-like tetramer with the small subunits forming a tetrameric 'cap' on each end of the 'barrel'.</text>
</comment>
<comment type="miscellaneous">
    <text evidence="3">Although originally identified as Cyanidium caldarium, these sequences derive from Galdieria sulphuraria.</text>
</comment>
<comment type="similarity">
    <text evidence="1">Belongs to the RuBisCO large chain family. Type I subfamily.</text>
</comment>
<sequence>MSQSLEEKSVQERTRIKNSRYESGVIPYAKMGYWNPDYQVKDTDVLALFRVTPQPGVDPIEAAAAVAGESSTATWTVVWTDLLTAADLYRAKAYKVDQVPNNPEQYFAYIAYELDLFEEGSIANLTASIIGNVFGFKAVKALRLEDMRLPFAYIKTFQGPATGVILERERLDKFGRPLLGCTTKPKLGLSGKNYGRVVYEALKGGLDFVKDDENINSQPFMRWRERYLFVMEAVNKAAAATGEVKGHYLNVTAATMEEMYARAQLAKELGSVIIMIDLVIGYTAIQTMAKWARDNDMILHLHRAGNSTYSRQKNHGMNFRVICKWMRMAGVDHIHAGTVVGKLEGDPIITRGFYKTLLLPKLERNLQEGLFFDMDWASLRKVMPVASGGIHAGQMHQLIHYLGEDVVLQFGGGTIGHPDGIQSGATANRVALEAMILARNENRDFLTEGPEILREAAKNCGALRTALDLWKDITFNYTSTDTSDFVETPTANI</sequence>
<feature type="chain" id="PRO_0000062476" description="Ribulose bisphosphate carboxylase large chain">
    <location>
        <begin position="1"/>
        <end position="493"/>
    </location>
</feature>
<feature type="active site" description="Proton acceptor" evidence="1">
    <location>
        <position position="184"/>
    </location>
</feature>
<feature type="active site" description="Proton acceptor" evidence="1">
    <location>
        <position position="302"/>
    </location>
</feature>
<feature type="binding site" description="in homodimeric partner" evidence="1">
    <location>
        <position position="132"/>
    </location>
    <ligand>
        <name>substrate</name>
    </ligand>
</feature>
<feature type="binding site" evidence="1">
    <location>
        <position position="182"/>
    </location>
    <ligand>
        <name>substrate</name>
    </ligand>
</feature>
<feature type="binding site" evidence="1">
    <location>
        <position position="186"/>
    </location>
    <ligand>
        <name>substrate</name>
    </ligand>
</feature>
<feature type="binding site" description="via carbamate group" evidence="1">
    <location>
        <position position="210"/>
    </location>
    <ligand>
        <name>Mg(2+)</name>
        <dbReference type="ChEBI" id="CHEBI:18420"/>
    </ligand>
</feature>
<feature type="binding site" evidence="1">
    <location>
        <position position="212"/>
    </location>
    <ligand>
        <name>Mg(2+)</name>
        <dbReference type="ChEBI" id="CHEBI:18420"/>
    </ligand>
</feature>
<feature type="binding site" evidence="1">
    <location>
        <position position="213"/>
    </location>
    <ligand>
        <name>Mg(2+)</name>
        <dbReference type="ChEBI" id="CHEBI:18420"/>
    </ligand>
</feature>
<feature type="binding site" evidence="1">
    <location>
        <position position="303"/>
    </location>
    <ligand>
        <name>substrate</name>
    </ligand>
</feature>
<feature type="binding site" evidence="1">
    <location>
        <position position="335"/>
    </location>
    <ligand>
        <name>substrate</name>
    </ligand>
</feature>
<feature type="binding site" evidence="1">
    <location>
        <position position="387"/>
    </location>
    <ligand>
        <name>substrate</name>
    </ligand>
</feature>
<feature type="site" description="Transition state stabilizer" evidence="1">
    <location>
        <position position="342"/>
    </location>
</feature>
<feature type="modified residue" description="S-nitrosocysteine" evidence="2 5 6 7">
    <location>
        <position position="181"/>
    </location>
</feature>
<feature type="modified residue" description="N6-carboxylysine" evidence="1">
    <location>
        <position position="210"/>
    </location>
</feature>
<feature type="modified residue" description="S-nitrosocysteine" evidence="2 5 6 7">
    <location>
        <position position="460"/>
    </location>
</feature>
<feature type="helix" evidence="8">
    <location>
        <begin position="29"/>
        <end position="33"/>
    </location>
</feature>
<feature type="strand" evidence="8">
    <location>
        <begin position="45"/>
        <end position="53"/>
    </location>
</feature>
<feature type="helix" evidence="8">
    <location>
        <begin position="59"/>
        <end position="69"/>
    </location>
</feature>
<feature type="helix" evidence="8">
    <location>
        <begin position="79"/>
        <end position="83"/>
    </location>
</feature>
<feature type="helix" evidence="8">
    <location>
        <begin position="86"/>
        <end position="89"/>
    </location>
</feature>
<feature type="strand" evidence="8">
    <location>
        <begin position="92"/>
        <end position="99"/>
    </location>
</feature>
<feature type="strand" evidence="8">
    <location>
        <begin position="102"/>
        <end position="112"/>
    </location>
</feature>
<feature type="helix" evidence="8">
    <location>
        <begin position="114"/>
        <end position="116"/>
    </location>
</feature>
<feature type="helix" evidence="8">
    <location>
        <begin position="122"/>
        <end position="130"/>
    </location>
</feature>
<feature type="helix" evidence="8">
    <location>
        <begin position="133"/>
        <end position="135"/>
    </location>
</feature>
<feature type="turn" evidence="9">
    <location>
        <begin position="136"/>
        <end position="138"/>
    </location>
</feature>
<feature type="strand" evidence="8">
    <location>
        <begin position="139"/>
        <end position="148"/>
    </location>
</feature>
<feature type="helix" evidence="8">
    <location>
        <begin position="151"/>
        <end position="154"/>
    </location>
</feature>
<feature type="helix" evidence="8">
    <location>
        <begin position="163"/>
        <end position="171"/>
    </location>
</feature>
<feature type="strand" evidence="8">
    <location>
        <begin position="178"/>
        <end position="182"/>
    </location>
</feature>
<feature type="strand" evidence="8">
    <location>
        <begin position="184"/>
        <end position="187"/>
    </location>
</feature>
<feature type="helix" evidence="8">
    <location>
        <begin position="191"/>
        <end position="204"/>
    </location>
</feature>
<feature type="strand" evidence="8">
    <location>
        <begin position="207"/>
        <end position="210"/>
    </location>
</feature>
<feature type="strand" evidence="8">
    <location>
        <begin position="216"/>
        <end position="218"/>
    </location>
</feature>
<feature type="helix" evidence="8">
    <location>
        <begin position="223"/>
        <end position="241"/>
    </location>
</feature>
<feature type="strand" evidence="8">
    <location>
        <begin position="246"/>
        <end position="250"/>
    </location>
</feature>
<feature type="helix" evidence="8">
    <location>
        <begin position="256"/>
        <end position="269"/>
    </location>
</feature>
<feature type="strand" evidence="8">
    <location>
        <begin position="272"/>
        <end position="277"/>
    </location>
</feature>
<feature type="helix" evidence="8">
    <location>
        <begin position="278"/>
        <end position="280"/>
    </location>
</feature>
<feature type="helix" evidence="8">
    <location>
        <begin position="282"/>
        <end position="294"/>
    </location>
</feature>
<feature type="strand" evidence="8">
    <location>
        <begin position="298"/>
        <end position="302"/>
    </location>
</feature>
<feature type="turn" evidence="8">
    <location>
        <begin position="304"/>
        <end position="306"/>
    </location>
</feature>
<feature type="helix" evidence="8">
    <location>
        <begin position="307"/>
        <end position="310"/>
    </location>
</feature>
<feature type="strand" evidence="8">
    <location>
        <begin position="311"/>
        <end position="317"/>
    </location>
</feature>
<feature type="helix" evidence="8">
    <location>
        <begin position="319"/>
        <end position="329"/>
    </location>
</feature>
<feature type="strand" evidence="8">
    <location>
        <begin position="332"/>
        <end position="335"/>
    </location>
</feature>
<feature type="strand" evidence="8">
    <location>
        <begin position="339"/>
        <end position="341"/>
    </location>
</feature>
<feature type="helix" evidence="8">
    <location>
        <begin position="347"/>
        <end position="358"/>
    </location>
</feature>
<feature type="strand" evidence="8">
    <location>
        <begin position="360"/>
        <end position="362"/>
    </location>
</feature>
<feature type="turn" evidence="8">
    <location>
        <begin position="366"/>
        <end position="369"/>
    </location>
</feature>
<feature type="strand" evidence="8">
    <location>
        <begin position="383"/>
        <end position="386"/>
    </location>
</feature>
<feature type="helix" evidence="8">
    <location>
        <begin position="392"/>
        <end position="394"/>
    </location>
</feature>
<feature type="helix" evidence="8">
    <location>
        <begin position="395"/>
        <end position="402"/>
    </location>
</feature>
<feature type="strand" evidence="8">
    <location>
        <begin position="407"/>
        <end position="411"/>
    </location>
</feature>
<feature type="helix" evidence="8">
    <location>
        <begin position="412"/>
        <end position="415"/>
    </location>
</feature>
<feature type="helix" evidence="8">
    <location>
        <begin position="421"/>
        <end position="440"/>
    </location>
</feature>
<feature type="helix" evidence="8">
    <location>
        <begin position="445"/>
        <end position="458"/>
    </location>
</feature>
<feature type="helix" evidence="8">
    <location>
        <begin position="461"/>
        <end position="469"/>
    </location>
</feature>
<feature type="turn" evidence="9">
    <location>
        <begin position="470"/>
        <end position="473"/>
    </location>
</feature>
<accession>P23755</accession>